<evidence type="ECO:0000250" key="1"/>
<evidence type="ECO:0000250" key="2">
    <source>
        <dbReference type="UniProtKB" id="P00352"/>
    </source>
</evidence>
<evidence type="ECO:0000255" key="3">
    <source>
        <dbReference type="PROSITE-ProRule" id="PRU10007"/>
    </source>
</evidence>
<evidence type="ECO:0000255" key="4">
    <source>
        <dbReference type="PROSITE-ProRule" id="PRU10008"/>
    </source>
</evidence>
<evidence type="ECO:0000269" key="5">
    <source>
    </source>
</evidence>
<evidence type="ECO:0000303" key="6">
    <source>
    </source>
</evidence>
<evidence type="ECO:0000305" key="7"/>
<evidence type="ECO:0000305" key="8">
    <source>
    </source>
</evidence>
<keyword id="KW-0007">Acetylation</keyword>
<keyword id="KW-0963">Cytoplasm</keyword>
<keyword id="KW-0520">NAD</keyword>
<keyword id="KW-0560">Oxidoreductase</keyword>
<keyword id="KW-0597">Phosphoprotein</keyword>
<keyword id="KW-1185">Reference proteome</keyword>
<gene>
    <name type="primary">Aldh1a7</name>
    <name evidence="6" type="synonym">Aldh-pb</name>
    <name type="synonym">Aldh1</name>
    <name type="synonym">Aldh1a4</name>
</gene>
<proteinExistence type="evidence at protein level"/>
<dbReference type="EC" id="1.2.1.3" evidence="5"/>
<dbReference type="EMBL" id="M23995">
    <property type="protein sequence ID" value="AAA40718.1"/>
    <property type="molecule type" value="mRNA"/>
</dbReference>
<dbReference type="PIR" id="A32616">
    <property type="entry name" value="A32616"/>
</dbReference>
<dbReference type="RefSeq" id="NP_058968.14">
    <property type="nucleotide sequence ID" value="NM_017272.15"/>
</dbReference>
<dbReference type="SMR" id="P13601"/>
<dbReference type="FunCoup" id="P13601">
    <property type="interactions" value="596"/>
</dbReference>
<dbReference type="IntAct" id="P13601">
    <property type="interactions" value="3"/>
</dbReference>
<dbReference type="BindingDB" id="P13601"/>
<dbReference type="ChEMBL" id="CHEMBL5354"/>
<dbReference type="GlyGen" id="P13601">
    <property type="glycosylation" value="1 site, 1 O-linked glycan (1 site)"/>
</dbReference>
<dbReference type="iPTMnet" id="P13601"/>
<dbReference type="PhosphoSitePlus" id="P13601"/>
<dbReference type="UCSC" id="RGD:620252">
    <property type="organism name" value="rat"/>
</dbReference>
<dbReference type="AGR" id="RGD:402093005"/>
<dbReference type="RGD" id="402093005">
    <property type="gene designation" value="Aldh1a7"/>
</dbReference>
<dbReference type="InParanoid" id="P13601"/>
<dbReference type="PhylomeDB" id="P13601"/>
<dbReference type="SABIO-RK" id="P13601"/>
<dbReference type="UniPathway" id="UPA00780">
    <property type="reaction ID" value="UER00768"/>
</dbReference>
<dbReference type="PRO" id="PR:P13601"/>
<dbReference type="Proteomes" id="UP000002494">
    <property type="component" value="Unplaced"/>
</dbReference>
<dbReference type="GO" id="GO:0005737">
    <property type="term" value="C:cytoplasm"/>
    <property type="evidence" value="ECO:0007669"/>
    <property type="project" value="UniProtKB-SubCell"/>
</dbReference>
<dbReference type="GO" id="GO:0004028">
    <property type="term" value="F:3-chloroallyl aldehyde dehydrogenase activity"/>
    <property type="evidence" value="ECO:0000314"/>
    <property type="project" value="RGD"/>
</dbReference>
<dbReference type="GO" id="GO:0004029">
    <property type="term" value="F:aldehyde dehydrogenase (NAD+) activity"/>
    <property type="evidence" value="ECO:0000314"/>
    <property type="project" value="RGD"/>
</dbReference>
<dbReference type="GO" id="GO:0018479">
    <property type="term" value="F:benzaldehyde dehydrogenase (NAD+) activity"/>
    <property type="evidence" value="ECO:0000314"/>
    <property type="project" value="RGD"/>
</dbReference>
<dbReference type="GO" id="GO:0042802">
    <property type="term" value="F:identical protein binding"/>
    <property type="evidence" value="ECO:0000353"/>
    <property type="project" value="RGD"/>
</dbReference>
<dbReference type="GO" id="GO:0051287">
    <property type="term" value="F:NAD binding"/>
    <property type="evidence" value="ECO:0000250"/>
    <property type="project" value="CAFA"/>
</dbReference>
<dbReference type="GO" id="GO:0006068">
    <property type="term" value="P:ethanol catabolic process"/>
    <property type="evidence" value="ECO:0007669"/>
    <property type="project" value="UniProtKB-UniPathway"/>
</dbReference>
<dbReference type="GO" id="GO:0035106">
    <property type="term" value="P:operant conditioning"/>
    <property type="evidence" value="ECO:0000270"/>
    <property type="project" value="RGD"/>
</dbReference>
<dbReference type="CDD" id="cd07141">
    <property type="entry name" value="ALDH_F1AB_F2_RALDH1"/>
    <property type="match status" value="1"/>
</dbReference>
<dbReference type="FunFam" id="3.40.605.10:FF:000050">
    <property type="entry name" value="Aldehyde dehydrogenase, mitochondrial"/>
    <property type="match status" value="1"/>
</dbReference>
<dbReference type="FunFam" id="3.40.309.10:FF:000001">
    <property type="entry name" value="Mitochondrial aldehyde dehydrogenase 2"/>
    <property type="match status" value="1"/>
</dbReference>
<dbReference type="Gene3D" id="3.40.605.10">
    <property type="entry name" value="Aldehyde Dehydrogenase, Chain A, domain 1"/>
    <property type="match status" value="1"/>
</dbReference>
<dbReference type="Gene3D" id="3.40.309.10">
    <property type="entry name" value="Aldehyde Dehydrogenase, Chain A, domain 2"/>
    <property type="match status" value="1"/>
</dbReference>
<dbReference type="InterPro" id="IPR016161">
    <property type="entry name" value="Ald_DH/histidinol_DH"/>
</dbReference>
<dbReference type="InterPro" id="IPR016163">
    <property type="entry name" value="Ald_DH_C"/>
</dbReference>
<dbReference type="InterPro" id="IPR016160">
    <property type="entry name" value="Ald_DH_CS_CYS"/>
</dbReference>
<dbReference type="InterPro" id="IPR029510">
    <property type="entry name" value="Ald_DH_CS_GLU"/>
</dbReference>
<dbReference type="InterPro" id="IPR016162">
    <property type="entry name" value="Ald_DH_N"/>
</dbReference>
<dbReference type="InterPro" id="IPR015590">
    <property type="entry name" value="Aldehyde_DH_dom"/>
</dbReference>
<dbReference type="PANTHER" id="PTHR11699">
    <property type="entry name" value="ALDEHYDE DEHYDROGENASE-RELATED"/>
    <property type="match status" value="1"/>
</dbReference>
<dbReference type="Pfam" id="PF00171">
    <property type="entry name" value="Aldedh"/>
    <property type="match status" value="1"/>
</dbReference>
<dbReference type="SUPFAM" id="SSF53720">
    <property type="entry name" value="ALDH-like"/>
    <property type="match status" value="1"/>
</dbReference>
<dbReference type="PROSITE" id="PS00070">
    <property type="entry name" value="ALDEHYDE_DEHYDR_CYS"/>
    <property type="match status" value="1"/>
</dbReference>
<dbReference type="PROSITE" id="PS00687">
    <property type="entry name" value="ALDEHYDE_DEHYDR_GLU"/>
    <property type="match status" value="1"/>
</dbReference>
<name>AL1A7_RAT</name>
<sequence>MSSPAQPAVPAPLANLKIQHTKIFINNEWHNSLNGKKFPVINPATEEVICHVEEGDKADVDKAVKAARQAFQIGSPWRTMDASERGCLLNKLADLMERDRVLLATMESMNAGKIFTHAYLLDTEVSIKALKYFAGWADKIHGQTIPSDGDVFTYTRREPIGVCGQIIPWNGPLILFIWKIGAALSCGNTVIVKPAEQTPLTALYMASLIKEAGFPPGVVNVVPGYGSTAGAAISSHMDIDKVSFTGSTEVGKLIKEAAGKSNLKRVTLELGGKSPCIVFADADLDSAVEFAHQGVFFHQGQICVAASRLFVEESIYDEFVRRSVERAKKYVLGNPLDSGISQGPQIDKEQHAKILDLIESGKKEGAKLECGGGRWGNKGFFVQPTVFSNVTDEMRIAKEEIFGPVQQIMKFKSIDEVIKRANNTPYGLAAGVFTKDLDRAITVSSALQAGTVWVNCYLTLSVQCPFGGFKMSGNGREMGEQGVYEYTELKTVAMKISQKNS</sequence>
<accession>P13601</accession>
<comment type="function">
    <text evidence="5">Can oxidize benzaldehyde, propionaldehyde and acetaldehyde. No detectable activity with retinal.</text>
</comment>
<comment type="catalytic activity">
    <reaction evidence="5">
        <text>an aldehyde + NAD(+) + H2O = a carboxylate + NADH + 2 H(+)</text>
        <dbReference type="Rhea" id="RHEA:16185"/>
        <dbReference type="ChEBI" id="CHEBI:15377"/>
        <dbReference type="ChEBI" id="CHEBI:15378"/>
        <dbReference type="ChEBI" id="CHEBI:17478"/>
        <dbReference type="ChEBI" id="CHEBI:29067"/>
        <dbReference type="ChEBI" id="CHEBI:57540"/>
        <dbReference type="ChEBI" id="CHEBI:57945"/>
        <dbReference type="EC" id="1.2.1.3"/>
    </reaction>
    <physiologicalReaction direction="left-to-right" evidence="5">
        <dbReference type="Rhea" id="RHEA:16186"/>
    </physiologicalReaction>
</comment>
<comment type="biophysicochemical properties">
    <kinetics>
        <KM evidence="5">2.4 mM for acetaldehyde</KM>
        <KM evidence="5">1.6 mM for propionaldehyde</KM>
        <KM evidence="5">4.7 uM for benzaldehyde</KM>
        <text>The highest catalytic efficiency is observed with benzaldehyde as substrate. No activity with retinal.</text>
    </kinetics>
</comment>
<comment type="pathway">
    <text evidence="8">Alcohol metabolism; ethanol degradation; acetate from ethanol: step 2/2.</text>
</comment>
<comment type="subunit">
    <text evidence="5">Homotetramer.</text>
</comment>
<comment type="subcellular location">
    <subcellularLocation>
        <location>Cytoplasm</location>
    </subcellularLocation>
</comment>
<comment type="tissue specificity">
    <text evidence="5">Very low levels in lung and liver.</text>
</comment>
<comment type="induction">
    <text>By phenobarbital.</text>
</comment>
<comment type="similarity">
    <text evidence="7">Belongs to the aldehyde dehydrogenase family.</text>
</comment>
<feature type="initiator methionine" description="Removed" evidence="2">
    <location>
        <position position="1"/>
    </location>
</feature>
<feature type="chain" id="PRO_0000056426" description="Aldehyde dehydrogenase, cytosolic 1">
    <location>
        <begin position="2"/>
        <end position="501"/>
    </location>
</feature>
<feature type="active site" description="Proton acceptor" evidence="3 4">
    <location>
        <position position="269"/>
    </location>
</feature>
<feature type="active site" description="Nucleophile" evidence="3 4">
    <location>
        <position position="303"/>
    </location>
</feature>
<feature type="binding site" evidence="1">
    <location>
        <begin position="246"/>
        <end position="251"/>
    </location>
    <ligand>
        <name>NAD(+)</name>
        <dbReference type="ChEBI" id="CHEBI:57540"/>
    </ligand>
</feature>
<feature type="site" description="Transition state stabilizer" evidence="1">
    <location>
        <position position="170"/>
    </location>
</feature>
<feature type="modified residue" description="N-acetylserine" evidence="2">
    <location>
        <position position="2"/>
    </location>
</feature>
<feature type="modified residue" description="N6-acetyllysine" evidence="2">
    <location>
        <position position="91"/>
    </location>
</feature>
<feature type="modified residue" description="N6-acetyllysine" evidence="2">
    <location>
        <position position="128"/>
    </location>
</feature>
<feature type="modified residue" description="N6-acetyllysine" evidence="2">
    <location>
        <position position="252"/>
    </location>
</feature>
<feature type="modified residue" description="N6-acetyllysine" evidence="2">
    <location>
        <position position="353"/>
    </location>
</feature>
<feature type="modified residue" description="N6-acetyllysine" evidence="2">
    <location>
        <position position="367"/>
    </location>
</feature>
<feature type="modified residue" description="N6-acetyllysine" evidence="2">
    <location>
        <position position="410"/>
    </location>
</feature>
<feature type="modified residue" description="Phosphoserine" evidence="2">
    <location>
        <position position="413"/>
    </location>
</feature>
<feature type="modified residue" description="N6-acetyllysine" evidence="2">
    <location>
        <position position="419"/>
    </location>
</feature>
<feature type="modified residue" description="N6-acetyllysine" evidence="2">
    <location>
        <position position="435"/>
    </location>
</feature>
<feature type="modified residue" description="N6-acetyllysine" evidence="2">
    <location>
        <position position="495"/>
    </location>
</feature>
<organism>
    <name type="scientific">Rattus norvegicus</name>
    <name type="common">Rat</name>
    <dbReference type="NCBI Taxonomy" id="10116"/>
    <lineage>
        <taxon>Eukaryota</taxon>
        <taxon>Metazoa</taxon>
        <taxon>Chordata</taxon>
        <taxon>Craniata</taxon>
        <taxon>Vertebrata</taxon>
        <taxon>Euteleostomi</taxon>
        <taxon>Mammalia</taxon>
        <taxon>Eutheria</taxon>
        <taxon>Euarchontoglires</taxon>
        <taxon>Glires</taxon>
        <taxon>Rodentia</taxon>
        <taxon>Myomorpha</taxon>
        <taxon>Muroidea</taxon>
        <taxon>Muridae</taxon>
        <taxon>Murinae</taxon>
        <taxon>Rattus</taxon>
    </lineage>
</organism>
<reference key="1">
    <citation type="journal article" date="1989" name="J. Biol. Chem.">
        <title>Phenobarbital-inducible aldehyde dehydrogenase in the rat. cDNA sequence and regulation of the mRNA by phenobarbital in responsive rats.</title>
        <authorList>
            <person name="Dunn T.J."/>
            <person name="Koleske A.J."/>
            <person name="Lindahl R."/>
            <person name="Pitot H.C."/>
        </authorList>
    </citation>
    <scope>NUCLEOTIDE SEQUENCE [MRNA]</scope>
</reference>
<reference key="2">
    <citation type="journal article" date="2000" name="Biochemistry">
        <title>Rat liver constitutive and phenobarbital-inducible cytosolic aldehyde dehydrogenases are highly homologous proteins that function as distinct isozymes.</title>
        <authorList>
            <person name="Kathmann E.C."/>
            <person name="Naylor S."/>
            <person name="Lipsky J.J."/>
        </authorList>
    </citation>
    <scope>FUNCTION</scope>
    <scope>BIOPHYSICOCHEMICAL PROPERTIES</scope>
    <scope>SUBUNIT</scope>
    <scope>TISSUE SPECIFICITY</scope>
    <scope>CATALYTIC ACTIVITY</scope>
</reference>
<protein>
    <recommendedName>
        <fullName>Aldehyde dehydrogenase, cytosolic 1</fullName>
        <ecNumber evidence="5">1.2.1.3</ecNumber>
    </recommendedName>
    <alternativeName>
        <fullName>ALDH class 1</fullName>
    </alternativeName>
    <alternativeName>
        <fullName>ALDH-E1</fullName>
    </alternativeName>
    <alternativeName>
        <fullName>ALHDII</fullName>
    </alternativeName>
    <alternativeName>
        <fullName>Aldehyde dehydrogenase family 1 member A7</fullName>
    </alternativeName>
    <alternativeName>
        <fullName>Aldehyde dehydrogenase phenobarbital-inducible</fullName>
    </alternativeName>
</protein>